<sequence length="769" mass="85887">MLSNRAFGETIEDYEVQHLLGKGGFATVYKARCLHTHQDVAIKMIDKKLIQGTGLTNRVRQEVEIHSRLKHPSVLQLYTFFQDANYVYLVLELAHNGELHRYMNHIARPFTETEAASILKQVVAGLLYLHSHNIMHRDISLSNLLLSREMHVKIADFGLATQLKRPDERHMTMCGTPNYISPEVVSRTSHGLPADVWSVGCMLYTLLVGRPPFETDAVQSTLNKVVMSEYIMPAHLSYEAQDLINKLLKKLPHERITLEAVLCHPFMLKCSNGGHSAPGALNVFSQSMESGDSGIITFASSDSRNSQQIRSVENSGPQQVLPQIREEFKQVHHKLPYEQTGLFGQASTGLAEPNWPGAAKSSAFCMEAGNVPNSKQASLKEDRISVPPLNTKRLLPTRYKTKNAIMSILRNGEVVLEFLKFRPTYNEDRINDICRISDDGQRIIIYQPDPGRGLPVREQPPDLQIPSGDCVYNYDNLPSKHWKKYIYGARFVGLVKSKTPKVTYFSTLGKCQLMETMTDFEIRFYSGAKLLKTPSEGLKVYDRNGMLLSDYSCSESRSLIEHGNECFTHCVNISNALEVAQTKDNSCFPVTIGRRPITDVQPAQRLDGLRDTTNIAFSTPKSNQGSINFSLSTISSTRNTSDFGTNCSRSNMLAAHQNIPIKRINVPEIGIATELSHGVVQVQFYDGSVVSVIPSMQGGGITYTQPNGTSTHFGKGDDLPFPVRDRVGQIPNIQLKLKTAPLLGSGRKTDYNNAMTPKTTTPYYNRMLL</sequence>
<proteinExistence type="evidence at protein level"/>
<dbReference type="EC" id="2.7.11.21"/>
<dbReference type="EMBL" id="AF106952">
    <property type="protein sequence ID" value="AAD19607.1"/>
    <property type="molecule type" value="mRNA"/>
</dbReference>
<dbReference type="EMBL" id="AE014296">
    <property type="protein sequence ID" value="AAF51737.1"/>
    <property type="molecule type" value="Genomic_DNA"/>
</dbReference>
<dbReference type="EMBL" id="BT004846">
    <property type="protein sequence ID" value="AAO45202.1"/>
    <property type="molecule type" value="mRNA"/>
</dbReference>
<dbReference type="EMBL" id="BT044561">
    <property type="protein sequence ID" value="ACI15756.1"/>
    <property type="molecule type" value="mRNA"/>
</dbReference>
<dbReference type="RefSeq" id="NP_649324.1">
    <property type="nucleotide sequence ID" value="NM_141067.3"/>
</dbReference>
<dbReference type="PDB" id="4G7N">
    <property type="method" value="X-ray"/>
    <property type="resolution" value="2.30 A"/>
    <property type="chains" value="A/B=382-602"/>
</dbReference>
<dbReference type="PDB" id="4NK7">
    <property type="method" value="X-ray"/>
    <property type="resolution" value="3.23 A"/>
    <property type="chains" value="A=383-601"/>
</dbReference>
<dbReference type="PDB" id="5LHX">
    <property type="method" value="X-ray"/>
    <property type="resolution" value="1.53 A"/>
    <property type="chains" value="A/B=657-745"/>
</dbReference>
<dbReference type="PDB" id="7RL3">
    <property type="method" value="X-ray"/>
    <property type="resolution" value="1.75 A"/>
    <property type="chains" value="A/B=657-745"/>
</dbReference>
<dbReference type="PDBsum" id="4G7N"/>
<dbReference type="PDBsum" id="4NK7"/>
<dbReference type="PDBsum" id="5LHX"/>
<dbReference type="PDBsum" id="7RL3"/>
<dbReference type="SMR" id="O97143"/>
<dbReference type="BioGRID" id="65629">
    <property type="interactions" value="74"/>
</dbReference>
<dbReference type="DIP" id="DIP-49071N"/>
<dbReference type="ELM" id="O97143"/>
<dbReference type="FunCoup" id="O97143">
    <property type="interactions" value="338"/>
</dbReference>
<dbReference type="IntAct" id="O97143">
    <property type="interactions" value="65"/>
</dbReference>
<dbReference type="STRING" id="7227.FBpp0078042"/>
<dbReference type="iPTMnet" id="O97143"/>
<dbReference type="PaxDb" id="7227-FBpp0078042"/>
<dbReference type="DNASU" id="40384"/>
<dbReference type="EnsemblMetazoa" id="FBtr0078387">
    <property type="protein sequence ID" value="FBpp0078042"/>
    <property type="gene ID" value="FBgn0026371"/>
</dbReference>
<dbReference type="GeneID" id="40384"/>
<dbReference type="KEGG" id="dme:Dmel_CG7186"/>
<dbReference type="UCSC" id="CG7186-RA">
    <property type="organism name" value="d. melanogaster"/>
</dbReference>
<dbReference type="AGR" id="FB:FBgn0026371"/>
<dbReference type="CTD" id="40384"/>
<dbReference type="FlyBase" id="FBgn0026371">
    <property type="gene designation" value="SAK"/>
</dbReference>
<dbReference type="VEuPathDB" id="VectorBase:FBgn0026371"/>
<dbReference type="eggNOG" id="KOG0575">
    <property type="taxonomic scope" value="Eukaryota"/>
</dbReference>
<dbReference type="GeneTree" id="ENSGT00940000156316"/>
<dbReference type="HOGENOM" id="CLU_008726_2_0_1"/>
<dbReference type="InParanoid" id="O97143"/>
<dbReference type="OMA" id="LPSKHWK"/>
<dbReference type="OrthoDB" id="10004143at2759"/>
<dbReference type="PhylomeDB" id="O97143"/>
<dbReference type="BRENDA" id="2.7.11.21">
    <property type="organism ID" value="1994"/>
</dbReference>
<dbReference type="SignaLink" id="O97143"/>
<dbReference type="BioGRID-ORCS" id="40384">
    <property type="hits" value="0 hits in 3 CRISPR screens"/>
</dbReference>
<dbReference type="CD-CODE" id="2838EF58">
    <property type="entry name" value="Centrosome"/>
</dbReference>
<dbReference type="ChiTaRS" id="SAK">
    <property type="organism name" value="fly"/>
</dbReference>
<dbReference type="EvolutionaryTrace" id="O97143"/>
<dbReference type="GenomeRNAi" id="40384"/>
<dbReference type="PRO" id="PR:O97143"/>
<dbReference type="Proteomes" id="UP000000803">
    <property type="component" value="Chromosome 3L"/>
</dbReference>
<dbReference type="Bgee" id="FBgn0026371">
    <property type="expression patterns" value="Expressed in T neuron T4c (Drosophila) in embryonic/larval optic lobe (Drosophila) and 68 other cell types or tissues"/>
</dbReference>
<dbReference type="GO" id="GO:0005814">
    <property type="term" value="C:centriole"/>
    <property type="evidence" value="ECO:0007669"/>
    <property type="project" value="UniProtKB-SubCell"/>
</dbReference>
<dbReference type="GO" id="GO:0005737">
    <property type="term" value="C:cytoplasm"/>
    <property type="evidence" value="ECO:0007669"/>
    <property type="project" value="UniProtKB-KW"/>
</dbReference>
<dbReference type="GO" id="GO:0005634">
    <property type="term" value="C:nucleus"/>
    <property type="evidence" value="ECO:0000318"/>
    <property type="project" value="GO_Central"/>
</dbReference>
<dbReference type="GO" id="GO:0005524">
    <property type="term" value="F:ATP binding"/>
    <property type="evidence" value="ECO:0007669"/>
    <property type="project" value="UniProtKB-KW"/>
</dbReference>
<dbReference type="GO" id="GO:0042802">
    <property type="term" value="F:identical protein binding"/>
    <property type="evidence" value="ECO:0000353"/>
    <property type="project" value="IntAct"/>
</dbReference>
<dbReference type="GO" id="GO:0106310">
    <property type="term" value="F:protein serine kinase activity"/>
    <property type="evidence" value="ECO:0007669"/>
    <property type="project" value="RHEA"/>
</dbReference>
<dbReference type="GO" id="GO:0004674">
    <property type="term" value="F:protein serine/threonine kinase activity"/>
    <property type="evidence" value="ECO:0000314"/>
    <property type="project" value="FlyBase"/>
</dbReference>
<dbReference type="GO" id="GO:0007099">
    <property type="term" value="P:centriole replication"/>
    <property type="evidence" value="ECO:0000314"/>
    <property type="project" value="FlyBase"/>
</dbReference>
<dbReference type="GO" id="GO:0007098">
    <property type="term" value="P:centrosome cycle"/>
    <property type="evidence" value="ECO:0000315"/>
    <property type="project" value="FlyBase"/>
</dbReference>
<dbReference type="GO" id="GO:0007140">
    <property type="term" value="P:male meiotic nuclear division"/>
    <property type="evidence" value="ECO:0000315"/>
    <property type="project" value="FlyBase"/>
</dbReference>
<dbReference type="GO" id="GO:0045732">
    <property type="term" value="P:positive regulation of protein catabolic process"/>
    <property type="evidence" value="ECO:0000315"/>
    <property type="project" value="FlyBase"/>
</dbReference>
<dbReference type="GO" id="GO:0046599">
    <property type="term" value="P:regulation of centriole replication"/>
    <property type="evidence" value="ECO:0000314"/>
    <property type="project" value="FlyBase"/>
</dbReference>
<dbReference type="GO" id="GO:0031647">
    <property type="term" value="P:regulation of protein stability"/>
    <property type="evidence" value="ECO:0000315"/>
    <property type="project" value="FlyBase"/>
</dbReference>
<dbReference type="GO" id="GO:0007288">
    <property type="term" value="P:sperm axoneme assembly"/>
    <property type="evidence" value="ECO:0000315"/>
    <property type="project" value="FlyBase"/>
</dbReference>
<dbReference type="GO" id="GO:0035186">
    <property type="term" value="P:syncytial blastoderm mitotic cell cycle"/>
    <property type="evidence" value="ECO:0000315"/>
    <property type="project" value="FlyBase"/>
</dbReference>
<dbReference type="CDD" id="cd13114">
    <property type="entry name" value="POLO_box_Plk4_1"/>
    <property type="match status" value="1"/>
</dbReference>
<dbReference type="CDD" id="cd13115">
    <property type="entry name" value="POLO_box_Plk4_2"/>
    <property type="match status" value="1"/>
</dbReference>
<dbReference type="CDD" id="cd13116">
    <property type="entry name" value="POLO_box_Plk4_3"/>
    <property type="match status" value="1"/>
</dbReference>
<dbReference type="CDD" id="cd14186">
    <property type="entry name" value="STKc_PLK4"/>
    <property type="match status" value="1"/>
</dbReference>
<dbReference type="FunFam" id="3.30.200.20:FF:000042">
    <property type="entry name" value="Aurora kinase A"/>
    <property type="match status" value="1"/>
</dbReference>
<dbReference type="FunFam" id="1.10.510.10:FF:000576">
    <property type="entry name" value="Serine/threonine-protein kinase PLK4"/>
    <property type="match status" value="1"/>
</dbReference>
<dbReference type="FunFam" id="2.40.50.930:FF:000001">
    <property type="entry name" value="Serine/threonine-protein kinase PLK4"/>
    <property type="match status" value="1"/>
</dbReference>
<dbReference type="FunFam" id="3.30.1120.130:FF:000002">
    <property type="entry name" value="Serine/threonine-protein kinase PLK4"/>
    <property type="match status" value="1"/>
</dbReference>
<dbReference type="FunFam" id="3.30.1120.120:FF:000001">
    <property type="entry name" value="serine/threonine-protein kinase PLK4 isoform X2"/>
    <property type="match status" value="1"/>
</dbReference>
<dbReference type="Gene3D" id="2.40.50.930">
    <property type="match status" value="1"/>
</dbReference>
<dbReference type="Gene3D" id="3.30.1120.120">
    <property type="match status" value="1"/>
</dbReference>
<dbReference type="Gene3D" id="3.30.1120.130">
    <property type="match status" value="1"/>
</dbReference>
<dbReference type="Gene3D" id="1.10.510.10">
    <property type="entry name" value="Transferase(Phosphotransferase) domain 1"/>
    <property type="match status" value="1"/>
</dbReference>
<dbReference type="InterPro" id="IPR011009">
    <property type="entry name" value="Kinase-like_dom_sf"/>
</dbReference>
<dbReference type="InterPro" id="IPR047108">
    <property type="entry name" value="Plk4-like_POLO_box_2_sf"/>
</dbReference>
<dbReference type="InterPro" id="IPR000959">
    <property type="entry name" value="POLO_box_dom"/>
</dbReference>
<dbReference type="InterPro" id="IPR033699">
    <property type="entry name" value="POLO_box_Plk4_1"/>
</dbReference>
<dbReference type="InterPro" id="IPR033698">
    <property type="entry name" value="POLO_box_Plk4_2"/>
</dbReference>
<dbReference type="InterPro" id="IPR033696">
    <property type="entry name" value="POLO_box_Plk4_C"/>
</dbReference>
<dbReference type="InterPro" id="IPR000719">
    <property type="entry name" value="Prot_kinase_dom"/>
</dbReference>
<dbReference type="InterPro" id="IPR017441">
    <property type="entry name" value="Protein_kinase_ATP_BS"/>
</dbReference>
<dbReference type="InterPro" id="IPR046437">
    <property type="entry name" value="Ser_Thr-PK_POLO_box_1_sf"/>
</dbReference>
<dbReference type="InterPro" id="IPR008266">
    <property type="entry name" value="Tyr_kinase_AS"/>
</dbReference>
<dbReference type="PANTHER" id="PTHR24345">
    <property type="entry name" value="SERINE/THREONINE-PROTEIN KINASE PLK"/>
    <property type="match status" value="1"/>
</dbReference>
<dbReference type="PANTHER" id="PTHR24345:SF91">
    <property type="entry name" value="SERINE_THREONINE-PROTEIN KINASE PLK4"/>
    <property type="match status" value="1"/>
</dbReference>
<dbReference type="Pfam" id="PF00069">
    <property type="entry name" value="Pkinase"/>
    <property type="match status" value="1"/>
</dbReference>
<dbReference type="Pfam" id="PF18190">
    <property type="entry name" value="Plk4_PB1"/>
    <property type="match status" value="1"/>
</dbReference>
<dbReference type="Pfam" id="PF18409">
    <property type="entry name" value="Plk4_PB2"/>
    <property type="match status" value="1"/>
</dbReference>
<dbReference type="SUPFAM" id="SSF82615">
    <property type="entry name" value="Polo-box domain"/>
    <property type="match status" value="1"/>
</dbReference>
<dbReference type="SUPFAM" id="SSF56112">
    <property type="entry name" value="Protein kinase-like (PK-like)"/>
    <property type="match status" value="1"/>
</dbReference>
<dbReference type="PROSITE" id="PS51984">
    <property type="entry name" value="CPB1"/>
    <property type="match status" value="1"/>
</dbReference>
<dbReference type="PROSITE" id="PS51985">
    <property type="entry name" value="CPB2"/>
    <property type="match status" value="1"/>
</dbReference>
<dbReference type="PROSITE" id="PS50078">
    <property type="entry name" value="POLO_BOX"/>
    <property type="match status" value="1"/>
</dbReference>
<dbReference type="PROSITE" id="PS00107">
    <property type="entry name" value="PROTEIN_KINASE_ATP"/>
    <property type="match status" value="1"/>
</dbReference>
<dbReference type="PROSITE" id="PS50011">
    <property type="entry name" value="PROTEIN_KINASE_DOM"/>
    <property type="match status" value="1"/>
</dbReference>
<feature type="chain" id="PRO_0000385291" description="Serine/threonine-protein kinase PLK4">
    <location>
        <begin position="1"/>
        <end position="769"/>
    </location>
</feature>
<feature type="domain" description="Protein kinase" evidence="3">
    <location>
        <begin position="14"/>
        <end position="267"/>
    </location>
</feature>
<feature type="domain" description="Cryptic POLO box 1 (CPB1)" evidence="4">
    <location>
        <begin position="381"/>
        <end position="498"/>
    </location>
</feature>
<feature type="domain" description="Cryptic POLO box 2 (CPB2)" evidence="5">
    <location>
        <begin position="499"/>
        <end position="602"/>
    </location>
</feature>
<feature type="domain" description="POLO box" evidence="2">
    <location>
        <begin position="660"/>
        <end position="739"/>
    </location>
</feature>
<feature type="active site" description="Proton acceptor" evidence="3">
    <location>
        <position position="138"/>
    </location>
</feature>
<feature type="binding site" evidence="3">
    <location>
        <begin position="20"/>
        <end position="28"/>
    </location>
    <ligand>
        <name>ATP</name>
        <dbReference type="ChEBI" id="CHEBI:30616"/>
    </ligand>
</feature>
<feature type="binding site" evidence="3">
    <location>
        <position position="43"/>
    </location>
    <ligand>
        <name>ATP</name>
        <dbReference type="ChEBI" id="CHEBI:30616"/>
    </ligand>
</feature>
<feature type="mutagenesis site" description="In SAK-ND; impairs interaction with SCF-slmb ubiquitin ligase complex and subsequent ubiquitination; when associated with A-297." evidence="9">
    <original>S</original>
    <variation>A</variation>
    <location>
        <position position="293"/>
    </location>
</feature>
<feature type="mutagenesis site" description="In SAK-ND; impairs interaction with SCF-slmb ubiquitin ligase complex and subsequent ubiquitination; when associated with A-292." evidence="9">
    <original>T</original>
    <variation>A</variation>
    <location>
        <position position="297"/>
    </location>
</feature>
<feature type="sequence conflict" description="In Ref. 4; AAO45202." evidence="13" ref="4">
    <original>L</original>
    <variation>V</variation>
    <location>
        <position position="145"/>
    </location>
</feature>
<feature type="strand" evidence="14">
    <location>
        <begin position="397"/>
        <end position="400"/>
    </location>
</feature>
<feature type="strand" evidence="14">
    <location>
        <begin position="402"/>
        <end position="408"/>
    </location>
</feature>
<feature type="strand" evidence="14">
    <location>
        <begin position="414"/>
        <end position="421"/>
    </location>
</feature>
<feature type="turn" evidence="14">
    <location>
        <begin position="423"/>
        <end position="425"/>
    </location>
</feature>
<feature type="strand" evidence="14">
    <location>
        <begin position="426"/>
        <end position="436"/>
    </location>
</feature>
<feature type="strand" evidence="14">
    <location>
        <begin position="442"/>
        <end position="446"/>
    </location>
</feature>
<feature type="turn" evidence="14">
    <location>
        <begin position="449"/>
        <end position="452"/>
    </location>
</feature>
<feature type="helix" evidence="14">
    <location>
        <begin position="468"/>
        <end position="470"/>
    </location>
</feature>
<feature type="strand" evidence="14">
    <location>
        <begin position="471"/>
        <end position="473"/>
    </location>
</feature>
<feature type="turn" evidence="14">
    <location>
        <begin position="474"/>
        <end position="476"/>
    </location>
</feature>
<feature type="helix" evidence="14">
    <location>
        <begin position="479"/>
        <end position="481"/>
    </location>
</feature>
<feature type="helix" evidence="14">
    <location>
        <begin position="482"/>
        <end position="496"/>
    </location>
</feature>
<feature type="strand" evidence="14">
    <location>
        <begin position="499"/>
        <end position="505"/>
    </location>
</feature>
<feature type="strand" evidence="14">
    <location>
        <begin position="507"/>
        <end position="514"/>
    </location>
</feature>
<feature type="strand" evidence="14">
    <location>
        <begin position="520"/>
        <end position="524"/>
    </location>
</feature>
<feature type="strand" evidence="14">
    <location>
        <begin position="529"/>
        <end position="533"/>
    </location>
</feature>
<feature type="turn" evidence="14">
    <location>
        <begin position="534"/>
        <end position="536"/>
    </location>
</feature>
<feature type="strand" evidence="14">
    <location>
        <begin position="537"/>
        <end position="541"/>
    </location>
</feature>
<feature type="helix" evidence="14">
    <location>
        <begin position="554"/>
        <end position="578"/>
    </location>
</feature>
<feature type="strand" evidence="14">
    <location>
        <begin position="589"/>
        <end position="593"/>
    </location>
</feature>
<feature type="strand" evidence="15">
    <location>
        <begin position="660"/>
        <end position="666"/>
    </location>
</feature>
<feature type="turn" evidence="15">
    <location>
        <begin position="667"/>
        <end position="669"/>
    </location>
</feature>
<feature type="strand" evidence="15">
    <location>
        <begin position="670"/>
        <end position="675"/>
    </location>
</feature>
<feature type="strand" evidence="15">
    <location>
        <begin position="680"/>
        <end position="684"/>
    </location>
</feature>
<feature type="strand" evidence="15">
    <location>
        <begin position="689"/>
        <end position="692"/>
    </location>
</feature>
<feature type="helix" evidence="15">
    <location>
        <begin position="695"/>
        <end position="697"/>
    </location>
</feature>
<feature type="strand" evidence="15">
    <location>
        <begin position="701"/>
        <end position="704"/>
    </location>
</feature>
<feature type="strand" evidence="15">
    <location>
        <begin position="710"/>
        <end position="713"/>
    </location>
</feature>
<feature type="helix" evidence="15">
    <location>
        <begin position="723"/>
        <end position="727"/>
    </location>
</feature>
<feature type="helix" evidence="15">
    <location>
        <begin position="730"/>
        <end position="738"/>
    </location>
</feature>
<organism>
    <name type="scientific">Drosophila melanogaster</name>
    <name type="common">Fruit fly</name>
    <dbReference type="NCBI Taxonomy" id="7227"/>
    <lineage>
        <taxon>Eukaryota</taxon>
        <taxon>Metazoa</taxon>
        <taxon>Ecdysozoa</taxon>
        <taxon>Arthropoda</taxon>
        <taxon>Hexapoda</taxon>
        <taxon>Insecta</taxon>
        <taxon>Pterygota</taxon>
        <taxon>Neoptera</taxon>
        <taxon>Endopterygota</taxon>
        <taxon>Diptera</taxon>
        <taxon>Brachycera</taxon>
        <taxon>Muscomorpha</taxon>
        <taxon>Ephydroidea</taxon>
        <taxon>Drosophilidae</taxon>
        <taxon>Drosophila</taxon>
        <taxon>Sophophora</taxon>
    </lineage>
</organism>
<protein>
    <recommendedName>
        <fullName>Serine/threonine-protein kinase PLK4</fullName>
        <ecNumber>2.7.11.21</ecNumber>
    </recommendedName>
    <alternativeName>
        <fullName>Polo-like kinase 4</fullName>
        <shortName>PLK-4</shortName>
    </alternativeName>
    <alternativeName>
        <fullName>Serine/threonine-protein kinase SAK</fullName>
    </alternativeName>
</protein>
<keyword id="KW-0002">3D-structure</keyword>
<keyword id="KW-0067">ATP-binding</keyword>
<keyword id="KW-0963">Cytoplasm</keyword>
<keyword id="KW-0206">Cytoskeleton</keyword>
<keyword id="KW-0418">Kinase</keyword>
<keyword id="KW-0547">Nucleotide-binding</keyword>
<keyword id="KW-1185">Reference proteome</keyword>
<keyword id="KW-0723">Serine/threonine-protein kinase</keyword>
<keyword id="KW-0808">Transferase</keyword>
<keyword id="KW-0832">Ubl conjugation</keyword>
<evidence type="ECO:0000250" key="1">
    <source>
        <dbReference type="UniProtKB" id="Q64702"/>
    </source>
</evidence>
<evidence type="ECO:0000255" key="2">
    <source>
        <dbReference type="PROSITE-ProRule" id="PRU00154"/>
    </source>
</evidence>
<evidence type="ECO:0000255" key="3">
    <source>
        <dbReference type="PROSITE-ProRule" id="PRU00159"/>
    </source>
</evidence>
<evidence type="ECO:0000255" key="4">
    <source>
        <dbReference type="PROSITE-ProRule" id="PRU01328"/>
    </source>
</evidence>
<evidence type="ECO:0000255" key="5">
    <source>
        <dbReference type="PROSITE-ProRule" id="PRU01329"/>
    </source>
</evidence>
<evidence type="ECO:0000269" key="6">
    <source>
    </source>
</evidence>
<evidence type="ECO:0000269" key="7">
    <source>
    </source>
</evidence>
<evidence type="ECO:0000269" key="8">
    <source>
    </source>
</evidence>
<evidence type="ECO:0000269" key="9">
    <source>
    </source>
</evidence>
<evidence type="ECO:0000269" key="10">
    <source>
    </source>
</evidence>
<evidence type="ECO:0000269" key="11">
    <source>
    </source>
</evidence>
<evidence type="ECO:0000269" key="12">
    <source>
    </source>
</evidence>
<evidence type="ECO:0000305" key="13"/>
<evidence type="ECO:0007829" key="14">
    <source>
        <dbReference type="PDB" id="4G7N"/>
    </source>
</evidence>
<evidence type="ECO:0007829" key="15">
    <source>
        <dbReference type="PDB" id="5LHX"/>
    </source>
</evidence>
<gene>
    <name type="primary">SAK</name>
    <name type="ORF">CG7186</name>
</gene>
<accession>O97143</accession>
<accession>Q86NL8</accession>
<comment type="function">
    <text evidence="6 7 8">Serine/threonine-protein kinase that plays a central role in centriole duplication. Able to trigger procentriole formation on the surface of the mother centriole cylinder, using mother centriole as a platform, leading to the recruitment of centriole biogenesis proteins such as Sas-6. When overexpressed, it is able to induce centrosome amplification through the simultaneous generation of multiple procentrioles adjoining each parental centriole during S phase. Centrosome amplification following overexpression can initiate tumorigenesis, highlighting the importance of centrosome regulation in cancers.</text>
</comment>
<comment type="catalytic activity">
    <reaction>
        <text>L-seryl-[protein] + ATP = O-phospho-L-seryl-[protein] + ADP + H(+)</text>
        <dbReference type="Rhea" id="RHEA:17989"/>
        <dbReference type="Rhea" id="RHEA-COMP:9863"/>
        <dbReference type="Rhea" id="RHEA-COMP:11604"/>
        <dbReference type="ChEBI" id="CHEBI:15378"/>
        <dbReference type="ChEBI" id="CHEBI:29999"/>
        <dbReference type="ChEBI" id="CHEBI:30616"/>
        <dbReference type="ChEBI" id="CHEBI:83421"/>
        <dbReference type="ChEBI" id="CHEBI:456216"/>
        <dbReference type="EC" id="2.7.11.21"/>
    </reaction>
</comment>
<comment type="catalytic activity">
    <reaction>
        <text>L-threonyl-[protein] + ATP = O-phospho-L-threonyl-[protein] + ADP + H(+)</text>
        <dbReference type="Rhea" id="RHEA:46608"/>
        <dbReference type="Rhea" id="RHEA-COMP:11060"/>
        <dbReference type="Rhea" id="RHEA-COMP:11605"/>
        <dbReference type="ChEBI" id="CHEBI:15378"/>
        <dbReference type="ChEBI" id="CHEBI:30013"/>
        <dbReference type="ChEBI" id="CHEBI:30616"/>
        <dbReference type="ChEBI" id="CHEBI:61977"/>
        <dbReference type="ChEBI" id="CHEBI:456216"/>
        <dbReference type="EC" id="2.7.11.21"/>
    </reaction>
</comment>
<comment type="subunit">
    <text evidence="1 12">Homodimer (By similarity). Interacts with Alms1a (PubMed:32965218).</text>
</comment>
<comment type="interaction">
    <interactant intactId="EBI-162366">
        <id>O97143</id>
    </interactant>
    <interactant intactId="EBI-108604">
        <id>Q9VNE4</id>
        <label>asl</label>
    </interactant>
    <organismsDiffer>false</organismsDiffer>
    <experiments>13</experiments>
</comment>
<comment type="interaction">
    <interactant intactId="EBI-162366">
        <id>O97143</id>
    </interactant>
    <interactant intactId="EBI-162366">
        <id>O97143</id>
        <label>SAK</label>
    </interactant>
    <organismsDiffer>false</organismsDiffer>
    <experiments>10</experiments>
</comment>
<comment type="interaction">
    <interactant intactId="EBI-162366">
        <id>O97143</id>
    </interactant>
    <interactant intactId="EBI-91763">
        <id>Q9VDE3</id>
        <label>slmb</label>
    </interactant>
    <organismsDiffer>false</organismsDiffer>
    <experiments>2</experiments>
</comment>
<comment type="subcellular location">
    <subcellularLocation>
        <location evidence="6 10 11 12">Cytoplasm</location>
        <location evidence="6 10 11 12">Cytoskeleton</location>
        <location evidence="6 10 11 12">Microtubule organizing center</location>
        <location evidence="6 10 11 12">Centrosome</location>
        <location evidence="6 10 11 12">Centriole</location>
    </subcellularLocation>
    <text evidence="11 12">Colocalizes with Sas-4 and Patronin at the microtubule organizing center (PubMed:20946984). Colocalizes with Alms1a at the mother centrosome in male germ stem cells (PubMed:32965218).</text>
</comment>
<comment type="tissue specificity">
    <text evidence="12">Expressed in testis (at protein level).</text>
</comment>
<comment type="PTM">
    <text evidence="9 10">Ubiquitinated by the SCF-slmb ubiquitin ligase complex; leading to its degradation by the proteasome during interphase and regulating centriole number and ensuring the block to centriole reduplication.</text>
</comment>
<comment type="similarity">
    <text evidence="3 4 5">Belongs to the protein kinase superfamily. Ser/Thr protein kinase family. CDC5/Polo subfamily.</text>
</comment>
<name>PLK4_DROME</name>
<reference key="1">
    <citation type="submission" date="1998-11" db="EMBL/GenBank/DDBJ databases">
        <authorList>
            <person name="Hudson J.W."/>
            <person name="Dennis J.W."/>
        </authorList>
    </citation>
    <scope>NUCLEOTIDE SEQUENCE [MRNA]</scope>
</reference>
<reference key="2">
    <citation type="journal article" date="2000" name="Science">
        <title>The genome sequence of Drosophila melanogaster.</title>
        <authorList>
            <person name="Adams M.D."/>
            <person name="Celniker S.E."/>
            <person name="Holt R.A."/>
            <person name="Evans C.A."/>
            <person name="Gocayne J.D."/>
            <person name="Amanatides P.G."/>
            <person name="Scherer S.E."/>
            <person name="Li P.W."/>
            <person name="Hoskins R.A."/>
            <person name="Galle R.F."/>
            <person name="George R.A."/>
            <person name="Lewis S.E."/>
            <person name="Richards S."/>
            <person name="Ashburner M."/>
            <person name="Henderson S.N."/>
            <person name="Sutton G.G."/>
            <person name="Wortman J.R."/>
            <person name="Yandell M.D."/>
            <person name="Zhang Q."/>
            <person name="Chen L.X."/>
            <person name="Brandon R.C."/>
            <person name="Rogers Y.-H.C."/>
            <person name="Blazej R.G."/>
            <person name="Champe M."/>
            <person name="Pfeiffer B.D."/>
            <person name="Wan K.H."/>
            <person name="Doyle C."/>
            <person name="Baxter E.G."/>
            <person name="Helt G."/>
            <person name="Nelson C.R."/>
            <person name="Miklos G.L.G."/>
            <person name="Abril J.F."/>
            <person name="Agbayani A."/>
            <person name="An H.-J."/>
            <person name="Andrews-Pfannkoch C."/>
            <person name="Baldwin D."/>
            <person name="Ballew R.M."/>
            <person name="Basu A."/>
            <person name="Baxendale J."/>
            <person name="Bayraktaroglu L."/>
            <person name="Beasley E.M."/>
            <person name="Beeson K.Y."/>
            <person name="Benos P.V."/>
            <person name="Berman B.P."/>
            <person name="Bhandari D."/>
            <person name="Bolshakov S."/>
            <person name="Borkova D."/>
            <person name="Botchan M.R."/>
            <person name="Bouck J."/>
            <person name="Brokstein P."/>
            <person name="Brottier P."/>
            <person name="Burtis K.C."/>
            <person name="Busam D.A."/>
            <person name="Butler H."/>
            <person name="Cadieu E."/>
            <person name="Center A."/>
            <person name="Chandra I."/>
            <person name="Cherry J.M."/>
            <person name="Cawley S."/>
            <person name="Dahlke C."/>
            <person name="Davenport L.B."/>
            <person name="Davies P."/>
            <person name="de Pablos B."/>
            <person name="Delcher A."/>
            <person name="Deng Z."/>
            <person name="Mays A.D."/>
            <person name="Dew I."/>
            <person name="Dietz S.M."/>
            <person name="Dodson K."/>
            <person name="Doup L.E."/>
            <person name="Downes M."/>
            <person name="Dugan-Rocha S."/>
            <person name="Dunkov B.C."/>
            <person name="Dunn P."/>
            <person name="Durbin K.J."/>
            <person name="Evangelista C.C."/>
            <person name="Ferraz C."/>
            <person name="Ferriera S."/>
            <person name="Fleischmann W."/>
            <person name="Fosler C."/>
            <person name="Gabrielian A.E."/>
            <person name="Garg N.S."/>
            <person name="Gelbart W.M."/>
            <person name="Glasser K."/>
            <person name="Glodek A."/>
            <person name="Gong F."/>
            <person name="Gorrell J.H."/>
            <person name="Gu Z."/>
            <person name="Guan P."/>
            <person name="Harris M."/>
            <person name="Harris N.L."/>
            <person name="Harvey D.A."/>
            <person name="Heiman T.J."/>
            <person name="Hernandez J.R."/>
            <person name="Houck J."/>
            <person name="Hostin D."/>
            <person name="Houston K.A."/>
            <person name="Howland T.J."/>
            <person name="Wei M.-H."/>
            <person name="Ibegwam C."/>
            <person name="Jalali M."/>
            <person name="Kalush F."/>
            <person name="Karpen G.H."/>
            <person name="Ke Z."/>
            <person name="Kennison J.A."/>
            <person name="Ketchum K.A."/>
            <person name="Kimmel B.E."/>
            <person name="Kodira C.D."/>
            <person name="Kraft C.L."/>
            <person name="Kravitz S."/>
            <person name="Kulp D."/>
            <person name="Lai Z."/>
            <person name="Lasko P."/>
            <person name="Lei Y."/>
            <person name="Levitsky A.A."/>
            <person name="Li J.H."/>
            <person name="Li Z."/>
            <person name="Liang Y."/>
            <person name="Lin X."/>
            <person name="Liu X."/>
            <person name="Mattei B."/>
            <person name="McIntosh T.C."/>
            <person name="McLeod M.P."/>
            <person name="McPherson D."/>
            <person name="Merkulov G."/>
            <person name="Milshina N.V."/>
            <person name="Mobarry C."/>
            <person name="Morris J."/>
            <person name="Moshrefi A."/>
            <person name="Mount S.M."/>
            <person name="Moy M."/>
            <person name="Murphy B."/>
            <person name="Murphy L."/>
            <person name="Muzny D.M."/>
            <person name="Nelson D.L."/>
            <person name="Nelson D.R."/>
            <person name="Nelson K.A."/>
            <person name="Nixon K."/>
            <person name="Nusskern D.R."/>
            <person name="Pacleb J.M."/>
            <person name="Palazzolo M."/>
            <person name="Pittman G.S."/>
            <person name="Pan S."/>
            <person name="Pollard J."/>
            <person name="Puri V."/>
            <person name="Reese M.G."/>
            <person name="Reinert K."/>
            <person name="Remington K."/>
            <person name="Saunders R.D.C."/>
            <person name="Scheeler F."/>
            <person name="Shen H."/>
            <person name="Shue B.C."/>
            <person name="Siden-Kiamos I."/>
            <person name="Simpson M."/>
            <person name="Skupski M.P."/>
            <person name="Smith T.J."/>
            <person name="Spier E."/>
            <person name="Spradling A.C."/>
            <person name="Stapleton M."/>
            <person name="Strong R."/>
            <person name="Sun E."/>
            <person name="Svirskas R."/>
            <person name="Tector C."/>
            <person name="Turner R."/>
            <person name="Venter E."/>
            <person name="Wang A.H."/>
            <person name="Wang X."/>
            <person name="Wang Z.-Y."/>
            <person name="Wassarman D.A."/>
            <person name="Weinstock G.M."/>
            <person name="Weissenbach J."/>
            <person name="Williams S.M."/>
            <person name="Woodage T."/>
            <person name="Worley K.C."/>
            <person name="Wu D."/>
            <person name="Yang S."/>
            <person name="Yao Q.A."/>
            <person name="Ye J."/>
            <person name="Yeh R.-F."/>
            <person name="Zaveri J.S."/>
            <person name="Zhan M."/>
            <person name="Zhang G."/>
            <person name="Zhao Q."/>
            <person name="Zheng L."/>
            <person name="Zheng X.H."/>
            <person name="Zhong F.N."/>
            <person name="Zhong W."/>
            <person name="Zhou X."/>
            <person name="Zhu S.C."/>
            <person name="Zhu X."/>
            <person name="Smith H.O."/>
            <person name="Gibbs R.A."/>
            <person name="Myers E.W."/>
            <person name="Rubin G.M."/>
            <person name="Venter J.C."/>
        </authorList>
    </citation>
    <scope>NUCLEOTIDE SEQUENCE [LARGE SCALE GENOMIC DNA]</scope>
    <source>
        <strain>Berkeley</strain>
    </source>
</reference>
<reference key="3">
    <citation type="journal article" date="2002" name="Genome Biol.">
        <title>Annotation of the Drosophila melanogaster euchromatic genome: a systematic review.</title>
        <authorList>
            <person name="Misra S."/>
            <person name="Crosby M.A."/>
            <person name="Mungall C.J."/>
            <person name="Matthews B.B."/>
            <person name="Campbell K.S."/>
            <person name="Hradecky P."/>
            <person name="Huang Y."/>
            <person name="Kaminker J.S."/>
            <person name="Millburn G.H."/>
            <person name="Prochnik S.E."/>
            <person name="Smith C.D."/>
            <person name="Tupy J.L."/>
            <person name="Whitfield E.J."/>
            <person name="Bayraktaroglu L."/>
            <person name="Berman B.P."/>
            <person name="Bettencourt B.R."/>
            <person name="Celniker S.E."/>
            <person name="de Grey A.D.N.J."/>
            <person name="Drysdale R.A."/>
            <person name="Harris N.L."/>
            <person name="Richter J."/>
            <person name="Russo S."/>
            <person name="Schroeder A.J."/>
            <person name="Shu S.Q."/>
            <person name="Stapleton M."/>
            <person name="Yamada C."/>
            <person name="Ashburner M."/>
            <person name="Gelbart W.M."/>
            <person name="Rubin G.M."/>
            <person name="Lewis S.E."/>
        </authorList>
    </citation>
    <scope>GENOME REANNOTATION</scope>
    <source>
        <strain>Berkeley</strain>
    </source>
</reference>
<reference key="4">
    <citation type="submission" date="2008-09" db="EMBL/GenBank/DDBJ databases">
        <authorList>
            <person name="Carlson J.W."/>
            <person name="Booth B."/>
            <person name="Frise E."/>
            <person name="Park S."/>
            <person name="Wan K.H."/>
            <person name="Yu C."/>
            <person name="Celniker S.E."/>
        </authorList>
    </citation>
    <scope>NUCLEOTIDE SEQUENCE [LARGE SCALE MRNA]</scope>
    <source>
        <strain>Berkeley</strain>
        <tissue>Embryo</tissue>
    </source>
</reference>
<reference key="5">
    <citation type="journal article" date="2005" name="Curr. Biol.">
        <title>SAK/PLK4 is required for centriole duplication and flagella development.</title>
        <authorList>
            <person name="Bettencourt-Dias M."/>
            <person name="Rodrigues-Martins A."/>
            <person name="Carpenter L."/>
            <person name="Riparbelli M."/>
            <person name="Lehmann L."/>
            <person name="Gatt M.K."/>
            <person name="Carmo N."/>
            <person name="Balloux F."/>
            <person name="Callaini G."/>
            <person name="Glover D.M."/>
        </authorList>
    </citation>
    <scope>FUNCTION</scope>
    <scope>SUBCELLULAR LOCATION</scope>
</reference>
<reference key="6">
    <citation type="journal article" date="2007" name="Science">
        <title>Revisiting the role of the mother centriole in centriole biogenesis.</title>
        <authorList>
            <person name="Rodrigues-Martins A."/>
            <person name="Riparbelli M."/>
            <person name="Callaini G."/>
            <person name="Glover D.M."/>
            <person name="Bettencourt-Dias M."/>
        </authorList>
    </citation>
    <scope>FUNCTION</scope>
</reference>
<reference key="7">
    <citation type="journal article" date="2008" name="Cell">
        <title>Centrosome amplification can initiate tumorigenesis in flies.</title>
        <authorList>
            <person name="Basto R."/>
            <person name="Brunk K."/>
            <person name="Vinadogrova T."/>
            <person name="Peel N."/>
            <person name="Franz A."/>
            <person name="Khodjakov A."/>
            <person name="Raff J.W."/>
        </authorList>
    </citation>
    <scope>FUNCTION</scope>
</reference>
<reference key="8">
    <citation type="journal article" date="2009" name="J. Cell Biol.">
        <title>The SCF Slimb ubiquitin ligase regulates Plk4/Sak levels to block centriole reduplication.</title>
        <authorList>
            <person name="Rogers G.C."/>
            <person name="Rusan N.M."/>
            <person name="Roberts D.M."/>
            <person name="Peifer M."/>
            <person name="Rogers S.L."/>
        </authorList>
    </citation>
    <scope>SUBCELLULAR LOCATION</scope>
    <scope>UBIQUITINATION</scope>
</reference>
<reference key="9">
    <citation type="journal article" date="2009" name="Curr. Biol.">
        <title>The SCF/Slimb ubiquitin ligase limits centrosome amplification through degradation of SAK/PLK4.</title>
        <authorList>
            <person name="Cunha-Ferreira I."/>
            <person name="Rodrigues-Martins A."/>
            <person name="Bento I."/>
            <person name="Riparbelli M."/>
            <person name="Zhang W."/>
            <person name="Laue E."/>
            <person name="Callaini G."/>
            <person name="Glover D.M."/>
            <person name="Bettencourt-Dias M."/>
        </authorList>
    </citation>
    <scope>UBIQUITINATION</scope>
    <scope>MUTAGENESIS OF SER-293 AND THR-297</scope>
</reference>
<reference key="10">
    <citation type="journal article" date="2010" name="Cell">
        <title>Patronin regulates the microtubule network by protecting microtubule minus ends.</title>
        <authorList>
            <person name="Goodwin S.S."/>
            <person name="Vale R.D."/>
        </authorList>
    </citation>
    <scope>SUBCELLULAR LOCATION</scope>
</reference>
<reference key="11">
    <citation type="journal article" date="2020" name="Elife">
        <title>Alstrom syndrome gene is a stem-cell-specific regulator of centriole duplication in the Drosophila testis.</title>
        <authorList>
            <person name="Chen C."/>
            <person name="Yamashita Y.M."/>
        </authorList>
    </citation>
    <scope>INTERACTION WITH ALMS1A</scope>
    <scope>SUBCELLULAR LOCATION</scope>
    <scope>TISSUE SPECIFICITY</scope>
</reference>